<sequence>MKTKIFNTFSISVKAKKIISVYSEIELLQSWQKASAKDPVLFLGSGSNTLFLENYQGTIILNRIKGFHVKENNFFWNIHVCSGELWHNIVTICVNKGISGLENLSWIPGYTGAAPIQNIGAYGVEFKQVCSYVDFIFLETGEKVRLSSQECNFGYRKSIFNSSKKFFNYAIVAIGLKLKKKWKACLNYTDLSFLEKEYVSPKKIYNKIFYIRKEKIPNPVYFGNAGSFFKNPLISSKQAKKILKNYPKAPCFKQLNGNVKFSAGWIIEACGLKGYKLGKAAVYHKQASIIINTGSATGYEIAYLAKYIFCIVKKNFSIQLEPEVKFISKIGEIKASKIIS</sequence>
<accession>Q8D243</accession>
<keyword id="KW-0131">Cell cycle</keyword>
<keyword id="KW-0132">Cell division</keyword>
<keyword id="KW-0133">Cell shape</keyword>
<keyword id="KW-0961">Cell wall biogenesis/degradation</keyword>
<keyword id="KW-0963">Cytoplasm</keyword>
<keyword id="KW-0274">FAD</keyword>
<keyword id="KW-0285">Flavoprotein</keyword>
<keyword id="KW-0521">NADP</keyword>
<keyword id="KW-0560">Oxidoreductase</keyword>
<keyword id="KW-0573">Peptidoglycan synthesis</keyword>
<keyword id="KW-1185">Reference proteome</keyword>
<proteinExistence type="inferred from homology"/>
<name>MURB_WIGBR</name>
<evidence type="ECO:0000255" key="1">
    <source>
        <dbReference type="HAMAP-Rule" id="MF_00037"/>
    </source>
</evidence>
<protein>
    <recommendedName>
        <fullName evidence="1">UDP-N-acetylenolpyruvoylglucosamine reductase</fullName>
        <ecNumber evidence="1">1.3.1.98</ecNumber>
    </recommendedName>
    <alternativeName>
        <fullName evidence="1">UDP-N-acetylmuramate dehydrogenase</fullName>
    </alternativeName>
</protein>
<dbReference type="EC" id="1.3.1.98" evidence="1"/>
<dbReference type="EMBL" id="BA000021">
    <property type="protein sequence ID" value="BAC24658.1"/>
    <property type="molecule type" value="Genomic_DNA"/>
</dbReference>
<dbReference type="SMR" id="Q8D243"/>
<dbReference type="STRING" id="36870.gene:10369016"/>
<dbReference type="KEGG" id="wbr:murB"/>
<dbReference type="eggNOG" id="COG0812">
    <property type="taxonomic scope" value="Bacteria"/>
</dbReference>
<dbReference type="HOGENOM" id="CLU_035304_0_0_6"/>
<dbReference type="OrthoDB" id="9804753at2"/>
<dbReference type="UniPathway" id="UPA00219"/>
<dbReference type="Proteomes" id="UP000000562">
    <property type="component" value="Chromosome"/>
</dbReference>
<dbReference type="GO" id="GO:0005829">
    <property type="term" value="C:cytosol"/>
    <property type="evidence" value="ECO:0007669"/>
    <property type="project" value="TreeGrafter"/>
</dbReference>
<dbReference type="GO" id="GO:0071949">
    <property type="term" value="F:FAD binding"/>
    <property type="evidence" value="ECO:0007669"/>
    <property type="project" value="InterPro"/>
</dbReference>
<dbReference type="GO" id="GO:0008762">
    <property type="term" value="F:UDP-N-acetylmuramate dehydrogenase activity"/>
    <property type="evidence" value="ECO:0007669"/>
    <property type="project" value="UniProtKB-UniRule"/>
</dbReference>
<dbReference type="GO" id="GO:0051301">
    <property type="term" value="P:cell division"/>
    <property type="evidence" value="ECO:0007669"/>
    <property type="project" value="UniProtKB-KW"/>
</dbReference>
<dbReference type="GO" id="GO:0071555">
    <property type="term" value="P:cell wall organization"/>
    <property type="evidence" value="ECO:0007669"/>
    <property type="project" value="UniProtKB-KW"/>
</dbReference>
<dbReference type="GO" id="GO:0009252">
    <property type="term" value="P:peptidoglycan biosynthetic process"/>
    <property type="evidence" value="ECO:0007669"/>
    <property type="project" value="UniProtKB-UniRule"/>
</dbReference>
<dbReference type="GO" id="GO:0008360">
    <property type="term" value="P:regulation of cell shape"/>
    <property type="evidence" value="ECO:0007669"/>
    <property type="project" value="UniProtKB-KW"/>
</dbReference>
<dbReference type="Gene3D" id="3.30.465.10">
    <property type="match status" value="1"/>
</dbReference>
<dbReference type="Gene3D" id="3.90.78.10">
    <property type="entry name" value="UDP-N-acetylenolpyruvoylglucosamine reductase, C-terminal domain"/>
    <property type="match status" value="1"/>
</dbReference>
<dbReference type="Gene3D" id="3.30.43.10">
    <property type="entry name" value="Uridine Diphospho-n-acetylenolpyruvylglucosamine Reductase, domain 2"/>
    <property type="match status" value="1"/>
</dbReference>
<dbReference type="HAMAP" id="MF_00037">
    <property type="entry name" value="MurB"/>
    <property type="match status" value="1"/>
</dbReference>
<dbReference type="InterPro" id="IPR016166">
    <property type="entry name" value="FAD-bd_PCMH"/>
</dbReference>
<dbReference type="InterPro" id="IPR036318">
    <property type="entry name" value="FAD-bd_PCMH-like_sf"/>
</dbReference>
<dbReference type="InterPro" id="IPR016167">
    <property type="entry name" value="FAD-bd_PCMH_sub1"/>
</dbReference>
<dbReference type="InterPro" id="IPR016169">
    <property type="entry name" value="FAD-bd_PCMH_sub2"/>
</dbReference>
<dbReference type="InterPro" id="IPR003170">
    <property type="entry name" value="MurB"/>
</dbReference>
<dbReference type="InterPro" id="IPR011601">
    <property type="entry name" value="MurB_C"/>
</dbReference>
<dbReference type="InterPro" id="IPR036635">
    <property type="entry name" value="MurB_C_sf"/>
</dbReference>
<dbReference type="InterPro" id="IPR006094">
    <property type="entry name" value="Oxid_FAD_bind_N"/>
</dbReference>
<dbReference type="NCBIfam" id="TIGR00179">
    <property type="entry name" value="murB"/>
    <property type="match status" value="1"/>
</dbReference>
<dbReference type="NCBIfam" id="NF000755">
    <property type="entry name" value="PRK00046.1"/>
    <property type="match status" value="1"/>
</dbReference>
<dbReference type="PANTHER" id="PTHR21071">
    <property type="entry name" value="UDP-N-ACETYLENOLPYRUVOYLGLUCOSAMINE REDUCTASE"/>
    <property type="match status" value="1"/>
</dbReference>
<dbReference type="PANTHER" id="PTHR21071:SF4">
    <property type="entry name" value="UDP-N-ACETYLENOLPYRUVOYLGLUCOSAMINE REDUCTASE"/>
    <property type="match status" value="1"/>
</dbReference>
<dbReference type="Pfam" id="PF01565">
    <property type="entry name" value="FAD_binding_4"/>
    <property type="match status" value="1"/>
</dbReference>
<dbReference type="Pfam" id="PF02873">
    <property type="entry name" value="MurB_C"/>
    <property type="match status" value="1"/>
</dbReference>
<dbReference type="SUPFAM" id="SSF56176">
    <property type="entry name" value="FAD-binding/transporter-associated domain-like"/>
    <property type="match status" value="1"/>
</dbReference>
<dbReference type="SUPFAM" id="SSF56194">
    <property type="entry name" value="Uridine diphospho-N-Acetylenolpyruvylglucosamine reductase, MurB, C-terminal domain"/>
    <property type="match status" value="1"/>
</dbReference>
<dbReference type="PROSITE" id="PS51387">
    <property type="entry name" value="FAD_PCMH"/>
    <property type="match status" value="1"/>
</dbReference>
<comment type="function">
    <text evidence="1">Cell wall formation.</text>
</comment>
<comment type="catalytic activity">
    <reaction evidence="1">
        <text>UDP-N-acetyl-alpha-D-muramate + NADP(+) = UDP-N-acetyl-3-O-(1-carboxyvinyl)-alpha-D-glucosamine + NADPH + H(+)</text>
        <dbReference type="Rhea" id="RHEA:12248"/>
        <dbReference type="ChEBI" id="CHEBI:15378"/>
        <dbReference type="ChEBI" id="CHEBI:57783"/>
        <dbReference type="ChEBI" id="CHEBI:58349"/>
        <dbReference type="ChEBI" id="CHEBI:68483"/>
        <dbReference type="ChEBI" id="CHEBI:70757"/>
        <dbReference type="EC" id="1.3.1.98"/>
    </reaction>
</comment>
<comment type="cofactor">
    <cofactor evidence="1">
        <name>FAD</name>
        <dbReference type="ChEBI" id="CHEBI:57692"/>
    </cofactor>
</comment>
<comment type="pathway">
    <text evidence="1">Cell wall biogenesis; peptidoglycan biosynthesis.</text>
</comment>
<comment type="subcellular location">
    <subcellularLocation>
        <location evidence="1">Cytoplasm</location>
    </subcellularLocation>
</comment>
<comment type="similarity">
    <text evidence="1">Belongs to the MurB family.</text>
</comment>
<feature type="chain" id="PRO_0000179290" description="UDP-N-acetylenolpyruvoylglucosamine reductase">
    <location>
        <begin position="1"/>
        <end position="340"/>
    </location>
</feature>
<feature type="domain" description="FAD-binding PCMH-type" evidence="1">
    <location>
        <begin position="11"/>
        <end position="181"/>
    </location>
</feature>
<feature type="active site" evidence="1">
    <location>
        <position position="156"/>
    </location>
</feature>
<feature type="active site" description="Proton donor" evidence="1">
    <location>
        <position position="227"/>
    </location>
</feature>
<feature type="active site" evidence="1">
    <location>
        <position position="323"/>
    </location>
</feature>
<organism>
    <name type="scientific">Wigglesworthia glossinidia brevipalpis</name>
    <dbReference type="NCBI Taxonomy" id="36870"/>
    <lineage>
        <taxon>Bacteria</taxon>
        <taxon>Pseudomonadati</taxon>
        <taxon>Pseudomonadota</taxon>
        <taxon>Gammaproteobacteria</taxon>
        <taxon>Enterobacterales</taxon>
        <taxon>Erwiniaceae</taxon>
        <taxon>Wigglesworthia</taxon>
    </lineage>
</organism>
<reference key="1">
    <citation type="journal article" date="2002" name="Nat. Genet.">
        <title>Genome sequence of the endocellular obligate symbiont of tsetse flies, Wigglesworthia glossinidia.</title>
        <authorList>
            <person name="Akman L."/>
            <person name="Yamashita A."/>
            <person name="Watanabe H."/>
            <person name="Oshima K."/>
            <person name="Shiba T."/>
            <person name="Hattori M."/>
            <person name="Aksoy S."/>
        </authorList>
    </citation>
    <scope>NUCLEOTIDE SEQUENCE [LARGE SCALE GENOMIC DNA]</scope>
</reference>
<gene>
    <name evidence="1" type="primary">murB</name>
    <name type="ordered locus">WIGBR5120</name>
</gene>